<feature type="chain" id="PRO_0000241139" description="Glutamyl-tRNA(Gln) amidotransferase subunit A">
    <location>
        <begin position="1"/>
        <end position="498"/>
    </location>
</feature>
<feature type="active site" description="Charge relay system" evidence="1">
    <location>
        <position position="79"/>
    </location>
</feature>
<feature type="active site" description="Charge relay system" evidence="1">
    <location>
        <position position="154"/>
    </location>
</feature>
<feature type="active site" description="Acyl-ester intermediate" evidence="1">
    <location>
        <position position="178"/>
    </location>
</feature>
<name>GATA_PSYCK</name>
<protein>
    <recommendedName>
        <fullName evidence="1">Glutamyl-tRNA(Gln) amidotransferase subunit A</fullName>
        <shortName evidence="1">Glu-ADT subunit A</shortName>
        <ecNumber evidence="1">6.3.5.7</ecNumber>
    </recommendedName>
</protein>
<evidence type="ECO:0000255" key="1">
    <source>
        <dbReference type="HAMAP-Rule" id="MF_00120"/>
    </source>
</evidence>
<accession>Q1QDJ4</accession>
<dbReference type="EC" id="6.3.5.7" evidence="1"/>
<dbReference type="EMBL" id="CP000323">
    <property type="protein sequence ID" value="ABE74259.1"/>
    <property type="molecule type" value="Genomic_DNA"/>
</dbReference>
<dbReference type="RefSeq" id="WP_011512844.1">
    <property type="nucleotide sequence ID" value="NC_007969.1"/>
</dbReference>
<dbReference type="SMR" id="Q1QDJ4"/>
<dbReference type="STRING" id="335284.Pcryo_0476"/>
<dbReference type="KEGG" id="pcr:Pcryo_0476"/>
<dbReference type="eggNOG" id="COG0154">
    <property type="taxonomic scope" value="Bacteria"/>
</dbReference>
<dbReference type="HOGENOM" id="CLU_009600_0_3_6"/>
<dbReference type="Proteomes" id="UP000002425">
    <property type="component" value="Chromosome"/>
</dbReference>
<dbReference type="GO" id="GO:0030956">
    <property type="term" value="C:glutamyl-tRNA(Gln) amidotransferase complex"/>
    <property type="evidence" value="ECO:0007669"/>
    <property type="project" value="InterPro"/>
</dbReference>
<dbReference type="GO" id="GO:0005524">
    <property type="term" value="F:ATP binding"/>
    <property type="evidence" value="ECO:0007669"/>
    <property type="project" value="UniProtKB-KW"/>
</dbReference>
<dbReference type="GO" id="GO:0050567">
    <property type="term" value="F:glutaminyl-tRNA synthase (glutamine-hydrolyzing) activity"/>
    <property type="evidence" value="ECO:0007669"/>
    <property type="project" value="UniProtKB-UniRule"/>
</dbReference>
<dbReference type="GO" id="GO:0006412">
    <property type="term" value="P:translation"/>
    <property type="evidence" value="ECO:0007669"/>
    <property type="project" value="UniProtKB-UniRule"/>
</dbReference>
<dbReference type="Gene3D" id="3.90.1300.10">
    <property type="entry name" value="Amidase signature (AS) domain"/>
    <property type="match status" value="1"/>
</dbReference>
<dbReference type="HAMAP" id="MF_00120">
    <property type="entry name" value="GatA"/>
    <property type="match status" value="1"/>
</dbReference>
<dbReference type="InterPro" id="IPR000120">
    <property type="entry name" value="Amidase"/>
</dbReference>
<dbReference type="InterPro" id="IPR020556">
    <property type="entry name" value="Amidase_CS"/>
</dbReference>
<dbReference type="InterPro" id="IPR023631">
    <property type="entry name" value="Amidase_dom"/>
</dbReference>
<dbReference type="InterPro" id="IPR036928">
    <property type="entry name" value="AS_sf"/>
</dbReference>
<dbReference type="InterPro" id="IPR004412">
    <property type="entry name" value="GatA"/>
</dbReference>
<dbReference type="NCBIfam" id="TIGR00132">
    <property type="entry name" value="gatA"/>
    <property type="match status" value="1"/>
</dbReference>
<dbReference type="PANTHER" id="PTHR11895:SF151">
    <property type="entry name" value="GLUTAMYL-TRNA(GLN) AMIDOTRANSFERASE SUBUNIT A"/>
    <property type="match status" value="1"/>
</dbReference>
<dbReference type="PANTHER" id="PTHR11895">
    <property type="entry name" value="TRANSAMIDASE"/>
    <property type="match status" value="1"/>
</dbReference>
<dbReference type="Pfam" id="PF01425">
    <property type="entry name" value="Amidase"/>
    <property type="match status" value="1"/>
</dbReference>
<dbReference type="SUPFAM" id="SSF75304">
    <property type="entry name" value="Amidase signature (AS) enzymes"/>
    <property type="match status" value="1"/>
</dbReference>
<dbReference type="PROSITE" id="PS00571">
    <property type="entry name" value="AMIDASES"/>
    <property type="match status" value="1"/>
</dbReference>
<keyword id="KW-0067">ATP-binding</keyword>
<keyword id="KW-0436">Ligase</keyword>
<keyword id="KW-0547">Nucleotide-binding</keyword>
<keyword id="KW-0648">Protein biosynthesis</keyword>
<sequence length="498" mass="53768">MSELHLLSTQQLITGLQDKQFSSLELTDHYIKRINALDSKINSFITHTSETARAQAKAADEMRVQGDKRPLLGVPMAHKDIFCTQGVLTTCGSKMLHNFISPYDATIVTNIDKAGMISLGKLNMDEFAMGSDNESSYYGAVHNPWNIAHVPGGSSGGSAAAVAAGFVPVATGSDTGGSIRQPASFCGLTGIKPTYGRVSRFGMIAYASSLDQAGSMGRSAMDCAFLLQPMIGHDPRDATSIKYDMPDYVQDLNDAAASAGDKPFAGLRIGVAKEYFSKGLDTEVEQAARAALKKYEELGATIVEVTITDPEITLATYYMLAPAEASSNLSRFDGVRFGYRCENPKDLIDLYTRSRSEGFGPEVQRRILSGTYALSAGYFDAYYTKAQKVRRIIIKDFEDAFANCDVIASPTAPTAAYKLGEDLDPATMYLGDVYTIGVNLAGLPALSQPVGLTSAGLPIGLQLIGQYWQESKLLSTAHLFQQHTDHHLQHSTIAKETV</sequence>
<proteinExistence type="inferred from homology"/>
<organism>
    <name type="scientific">Psychrobacter cryohalolentis (strain ATCC BAA-1226 / DSM 17306 / VKM B-2378 / K5)</name>
    <dbReference type="NCBI Taxonomy" id="335284"/>
    <lineage>
        <taxon>Bacteria</taxon>
        <taxon>Pseudomonadati</taxon>
        <taxon>Pseudomonadota</taxon>
        <taxon>Gammaproteobacteria</taxon>
        <taxon>Moraxellales</taxon>
        <taxon>Moraxellaceae</taxon>
        <taxon>Psychrobacter</taxon>
    </lineage>
</organism>
<comment type="function">
    <text evidence="1">Allows the formation of correctly charged Gln-tRNA(Gln) through the transamidation of misacylated Glu-tRNA(Gln) in organisms which lack glutaminyl-tRNA synthetase. The reaction takes place in the presence of glutamine and ATP through an activated gamma-phospho-Glu-tRNA(Gln).</text>
</comment>
<comment type="catalytic activity">
    <reaction evidence="1">
        <text>L-glutamyl-tRNA(Gln) + L-glutamine + ATP + H2O = L-glutaminyl-tRNA(Gln) + L-glutamate + ADP + phosphate + H(+)</text>
        <dbReference type="Rhea" id="RHEA:17521"/>
        <dbReference type="Rhea" id="RHEA-COMP:9681"/>
        <dbReference type="Rhea" id="RHEA-COMP:9684"/>
        <dbReference type="ChEBI" id="CHEBI:15377"/>
        <dbReference type="ChEBI" id="CHEBI:15378"/>
        <dbReference type="ChEBI" id="CHEBI:29985"/>
        <dbReference type="ChEBI" id="CHEBI:30616"/>
        <dbReference type="ChEBI" id="CHEBI:43474"/>
        <dbReference type="ChEBI" id="CHEBI:58359"/>
        <dbReference type="ChEBI" id="CHEBI:78520"/>
        <dbReference type="ChEBI" id="CHEBI:78521"/>
        <dbReference type="ChEBI" id="CHEBI:456216"/>
        <dbReference type="EC" id="6.3.5.7"/>
    </reaction>
</comment>
<comment type="subunit">
    <text evidence="1">Heterotrimer of A, B and C subunits.</text>
</comment>
<comment type="similarity">
    <text evidence="1">Belongs to the amidase family. GatA subfamily.</text>
</comment>
<gene>
    <name evidence="1" type="primary">gatA</name>
    <name type="ordered locus">Pcryo_0476</name>
</gene>
<reference key="1">
    <citation type="submission" date="2006-03" db="EMBL/GenBank/DDBJ databases">
        <title>Complete sequence of chromosome of Psychrobacter cryohalolentis K5.</title>
        <authorList>
            <consortium name="US DOE Joint Genome Institute"/>
            <person name="Copeland A."/>
            <person name="Lucas S."/>
            <person name="Lapidus A."/>
            <person name="Barry K."/>
            <person name="Detter J.C."/>
            <person name="Glavina T."/>
            <person name="Hammon N."/>
            <person name="Israni S."/>
            <person name="Dalin E."/>
            <person name="Tice H."/>
            <person name="Pitluck S."/>
            <person name="Brettin T."/>
            <person name="Bruce D."/>
            <person name="Han C."/>
            <person name="Tapia R."/>
            <person name="Sims D.R."/>
            <person name="Gilna P."/>
            <person name="Schmutz J."/>
            <person name="Larimer F."/>
            <person name="Land M."/>
            <person name="Hauser L."/>
            <person name="Kyrpides N."/>
            <person name="Kim E."/>
            <person name="Richardson P."/>
        </authorList>
    </citation>
    <scope>NUCLEOTIDE SEQUENCE [LARGE SCALE GENOMIC DNA]</scope>
    <source>
        <strain>ATCC BAA-1226 / DSM 17306 / VKM B-2378 / K5</strain>
    </source>
</reference>